<proteinExistence type="inferred from homology"/>
<gene>
    <name evidence="1" type="primary">xseA</name>
    <name type="ordered locus">BCE33L3933</name>
</gene>
<comment type="function">
    <text evidence="1">Bidirectionally degrades single-stranded DNA into large acid-insoluble oligonucleotides, which are then degraded further into small acid-soluble oligonucleotides.</text>
</comment>
<comment type="catalytic activity">
    <reaction evidence="1">
        <text>Exonucleolytic cleavage in either 5'- to 3'- or 3'- to 5'-direction to yield nucleoside 5'-phosphates.</text>
        <dbReference type="EC" id="3.1.11.6"/>
    </reaction>
</comment>
<comment type="subunit">
    <text evidence="1">Heterooligomer composed of large and small subunits.</text>
</comment>
<comment type="subcellular location">
    <subcellularLocation>
        <location evidence="1">Cytoplasm</location>
    </subcellularLocation>
</comment>
<comment type="similarity">
    <text evidence="1">Belongs to the XseA family.</text>
</comment>
<name>EX7L_BACCZ</name>
<protein>
    <recommendedName>
        <fullName evidence="1">Exodeoxyribonuclease 7 large subunit</fullName>
        <ecNumber evidence="1">3.1.11.6</ecNumber>
    </recommendedName>
    <alternativeName>
        <fullName evidence="1">Exodeoxyribonuclease VII large subunit</fullName>
        <shortName evidence="1">Exonuclease VII large subunit</shortName>
    </alternativeName>
</protein>
<evidence type="ECO:0000255" key="1">
    <source>
        <dbReference type="HAMAP-Rule" id="MF_00378"/>
    </source>
</evidence>
<dbReference type="EC" id="3.1.11.6" evidence="1"/>
<dbReference type="EMBL" id="CP000001">
    <property type="protein sequence ID" value="AAU16336.1"/>
    <property type="molecule type" value="Genomic_DNA"/>
</dbReference>
<dbReference type="RefSeq" id="WP_000415260.1">
    <property type="nucleotide sequence ID" value="NZ_CP009968.1"/>
</dbReference>
<dbReference type="SMR" id="Q635A4"/>
<dbReference type="KEGG" id="bcz:BCE33L3933"/>
<dbReference type="PATRIC" id="fig|288681.22.peg.1464"/>
<dbReference type="Proteomes" id="UP000002612">
    <property type="component" value="Chromosome"/>
</dbReference>
<dbReference type="GO" id="GO:0005737">
    <property type="term" value="C:cytoplasm"/>
    <property type="evidence" value="ECO:0007669"/>
    <property type="project" value="UniProtKB-SubCell"/>
</dbReference>
<dbReference type="GO" id="GO:0009318">
    <property type="term" value="C:exodeoxyribonuclease VII complex"/>
    <property type="evidence" value="ECO:0007669"/>
    <property type="project" value="InterPro"/>
</dbReference>
<dbReference type="GO" id="GO:0008855">
    <property type="term" value="F:exodeoxyribonuclease VII activity"/>
    <property type="evidence" value="ECO:0007669"/>
    <property type="project" value="UniProtKB-UniRule"/>
</dbReference>
<dbReference type="GO" id="GO:0003676">
    <property type="term" value="F:nucleic acid binding"/>
    <property type="evidence" value="ECO:0007669"/>
    <property type="project" value="InterPro"/>
</dbReference>
<dbReference type="GO" id="GO:0006308">
    <property type="term" value="P:DNA catabolic process"/>
    <property type="evidence" value="ECO:0007669"/>
    <property type="project" value="UniProtKB-UniRule"/>
</dbReference>
<dbReference type="CDD" id="cd04489">
    <property type="entry name" value="ExoVII_LU_OBF"/>
    <property type="match status" value="1"/>
</dbReference>
<dbReference type="HAMAP" id="MF_00378">
    <property type="entry name" value="Exonuc_7_L"/>
    <property type="match status" value="1"/>
</dbReference>
<dbReference type="InterPro" id="IPR003753">
    <property type="entry name" value="Exonuc_VII_L"/>
</dbReference>
<dbReference type="InterPro" id="IPR020579">
    <property type="entry name" value="Exonuc_VII_lsu_C"/>
</dbReference>
<dbReference type="InterPro" id="IPR025824">
    <property type="entry name" value="OB-fold_nuc-bd_dom"/>
</dbReference>
<dbReference type="NCBIfam" id="TIGR00237">
    <property type="entry name" value="xseA"/>
    <property type="match status" value="1"/>
</dbReference>
<dbReference type="PANTHER" id="PTHR30008">
    <property type="entry name" value="EXODEOXYRIBONUCLEASE 7 LARGE SUBUNIT"/>
    <property type="match status" value="1"/>
</dbReference>
<dbReference type="PANTHER" id="PTHR30008:SF0">
    <property type="entry name" value="EXODEOXYRIBONUCLEASE 7 LARGE SUBUNIT"/>
    <property type="match status" value="1"/>
</dbReference>
<dbReference type="Pfam" id="PF02601">
    <property type="entry name" value="Exonuc_VII_L"/>
    <property type="match status" value="1"/>
</dbReference>
<dbReference type="Pfam" id="PF13742">
    <property type="entry name" value="tRNA_anti_2"/>
    <property type="match status" value="1"/>
</dbReference>
<organism>
    <name type="scientific">Bacillus cereus (strain ZK / E33L)</name>
    <dbReference type="NCBI Taxonomy" id="288681"/>
    <lineage>
        <taxon>Bacteria</taxon>
        <taxon>Bacillati</taxon>
        <taxon>Bacillota</taxon>
        <taxon>Bacilli</taxon>
        <taxon>Bacillales</taxon>
        <taxon>Bacillaceae</taxon>
        <taxon>Bacillus</taxon>
        <taxon>Bacillus cereus group</taxon>
    </lineage>
</organism>
<keyword id="KW-0963">Cytoplasm</keyword>
<keyword id="KW-0269">Exonuclease</keyword>
<keyword id="KW-0378">Hydrolase</keyword>
<keyword id="KW-0540">Nuclease</keyword>
<reference key="1">
    <citation type="journal article" date="2006" name="J. Bacteriol.">
        <title>Pathogenomic sequence analysis of Bacillus cereus and Bacillus thuringiensis isolates closely related to Bacillus anthracis.</title>
        <authorList>
            <person name="Han C.S."/>
            <person name="Xie G."/>
            <person name="Challacombe J.F."/>
            <person name="Altherr M.R."/>
            <person name="Bhotika S.S."/>
            <person name="Bruce D."/>
            <person name="Campbell C.S."/>
            <person name="Campbell M.L."/>
            <person name="Chen J."/>
            <person name="Chertkov O."/>
            <person name="Cleland C."/>
            <person name="Dimitrijevic M."/>
            <person name="Doggett N.A."/>
            <person name="Fawcett J.J."/>
            <person name="Glavina T."/>
            <person name="Goodwin L.A."/>
            <person name="Hill K.K."/>
            <person name="Hitchcock P."/>
            <person name="Jackson P.J."/>
            <person name="Keim P."/>
            <person name="Kewalramani A.R."/>
            <person name="Longmire J."/>
            <person name="Lucas S."/>
            <person name="Malfatti S."/>
            <person name="McMurry K."/>
            <person name="Meincke L.J."/>
            <person name="Misra M."/>
            <person name="Moseman B.L."/>
            <person name="Mundt M."/>
            <person name="Munk A.C."/>
            <person name="Okinaka R.T."/>
            <person name="Parson-Quintana B."/>
            <person name="Reilly L.P."/>
            <person name="Richardson P."/>
            <person name="Robinson D.L."/>
            <person name="Rubin E."/>
            <person name="Saunders E."/>
            <person name="Tapia R."/>
            <person name="Tesmer J.G."/>
            <person name="Thayer N."/>
            <person name="Thompson L.S."/>
            <person name="Tice H."/>
            <person name="Ticknor L.O."/>
            <person name="Wills P.L."/>
            <person name="Brettin T.S."/>
            <person name="Gilna P."/>
        </authorList>
    </citation>
    <scope>NUCLEOTIDE SEQUENCE [LARGE SCALE GENOMIC DNA]</scope>
    <source>
        <strain>ZK / E33L</strain>
    </source>
</reference>
<accession>Q635A4</accession>
<sequence length="452" mass="51455">MEKQYLTVTALTRYIKTKIEYDPHLQSVWLKGEISNFKNHSRGHMYFTLKDENARIAAVMFAGHNRNIKFRPENGMKVLVKGKISVYEASGSYQIYIQDMQPDGIGNLHLAYEQLKVRLEEEGLFSQVYKKTIPPYAKTIGVITSPTGAAIRDIITTIKRRYPIGNVIVFPVLVQGESAAPSIVQAIRTANEMEEIDVLIVGRGGGSIEELWAFNEEMVARAIFKSEIPIISAVGHETDFTIADFVADLRAPTPTAAAELAAPNIIELQEKVLQRTLRLQRAMRELVHKKEEKLQVLQKSYAFRYPRQVYEQKEEQLDRALEQLVLAKERYIDKKVNQLKQLSFYLEKHHPSQKIMQTKVAVETLQKQLQREMQTLLQTKEFAFVRAAQKLEALSPLKVMMRGYGLVYDEEKQVLKSVKDVSLGDAVSVQLQDGILDCSVSGIEERELNNGK</sequence>
<feature type="chain" id="PRO_0000273642" description="Exodeoxyribonuclease 7 large subunit">
    <location>
        <begin position="1"/>
        <end position="452"/>
    </location>
</feature>